<dbReference type="EMBL" id="AE000516">
    <property type="protein sequence ID" value="AAK46331.1"/>
    <property type="molecule type" value="Genomic_DNA"/>
</dbReference>
<dbReference type="PIR" id="D70758">
    <property type="entry name" value="D70758"/>
</dbReference>
<dbReference type="RefSeq" id="WP_003899122.1">
    <property type="nucleotide sequence ID" value="NZ_KK341227.1"/>
</dbReference>
<dbReference type="SMR" id="P9WLN8"/>
<dbReference type="KEGG" id="mtc:MT2054"/>
<dbReference type="PATRIC" id="fig|83331.31.peg.2211"/>
<dbReference type="HOGENOM" id="CLU_027389_2_3_11"/>
<dbReference type="Proteomes" id="UP000001020">
    <property type="component" value="Chromosome"/>
</dbReference>
<dbReference type="GO" id="GO:0003824">
    <property type="term" value="F:catalytic activity"/>
    <property type="evidence" value="ECO:0007669"/>
    <property type="project" value="InterPro"/>
</dbReference>
<dbReference type="CDD" id="cd00377">
    <property type="entry name" value="ICL_PEPM"/>
    <property type="match status" value="1"/>
</dbReference>
<dbReference type="Gene3D" id="3.20.20.60">
    <property type="entry name" value="Phosphoenolpyruvate-binding domains"/>
    <property type="match status" value="1"/>
</dbReference>
<dbReference type="InterPro" id="IPR039556">
    <property type="entry name" value="ICL/PEPM"/>
</dbReference>
<dbReference type="InterPro" id="IPR015813">
    <property type="entry name" value="Pyrv/PenolPyrv_kinase-like_dom"/>
</dbReference>
<dbReference type="InterPro" id="IPR040442">
    <property type="entry name" value="Pyrv_kinase-like_dom_sf"/>
</dbReference>
<dbReference type="PANTHER" id="PTHR42905:SF16">
    <property type="entry name" value="CARBOXYPHOSPHONOENOLPYRUVATE PHOSPHONOMUTASE-LIKE PROTEIN (AFU_ORTHOLOGUE AFUA_5G07230)"/>
    <property type="match status" value="1"/>
</dbReference>
<dbReference type="PANTHER" id="PTHR42905">
    <property type="entry name" value="PHOSPHOENOLPYRUVATE CARBOXYLASE"/>
    <property type="match status" value="1"/>
</dbReference>
<dbReference type="Pfam" id="PF13714">
    <property type="entry name" value="PEP_mutase"/>
    <property type="match status" value="1"/>
</dbReference>
<dbReference type="SUPFAM" id="SSF51621">
    <property type="entry name" value="Phosphoenolpyruvate/pyruvate domain"/>
    <property type="match status" value="1"/>
</dbReference>
<name>Y1998_MYCTO</name>
<reference key="1">
    <citation type="journal article" date="2002" name="J. Bacteriol.">
        <title>Whole-genome comparison of Mycobacterium tuberculosis clinical and laboratory strains.</title>
        <authorList>
            <person name="Fleischmann R.D."/>
            <person name="Alland D."/>
            <person name="Eisen J.A."/>
            <person name="Carpenter L."/>
            <person name="White O."/>
            <person name="Peterson J.D."/>
            <person name="DeBoy R.T."/>
            <person name="Dodson R.J."/>
            <person name="Gwinn M.L."/>
            <person name="Haft D.H."/>
            <person name="Hickey E.K."/>
            <person name="Kolonay J.F."/>
            <person name="Nelson W.C."/>
            <person name="Umayam L.A."/>
            <person name="Ermolaeva M.D."/>
            <person name="Salzberg S.L."/>
            <person name="Delcher A."/>
            <person name="Utterback T.R."/>
            <person name="Weidman J.F."/>
            <person name="Khouri H.M."/>
            <person name="Gill J."/>
            <person name="Mikula A."/>
            <person name="Bishai W."/>
            <person name="Jacobs W.R. Jr."/>
            <person name="Venter J.C."/>
            <person name="Fraser C.M."/>
        </authorList>
    </citation>
    <scope>NUCLEOTIDE SEQUENCE [LARGE SCALE GENOMIC DNA]</scope>
    <source>
        <strain>CDC 1551 / Oshkosh</strain>
    </source>
</reference>
<reference key="2">
    <citation type="journal article" date="2003" name="J. Exp. Med.">
        <title>Inhibition of respiration by nitric oxide induces a Mycobacterium tuberculosis dormancy program.</title>
        <authorList>
            <person name="Voskuil M.I."/>
            <person name="Schnappinger D."/>
            <person name="Visconti K.C."/>
            <person name="Harrell M.I."/>
            <person name="Dolganov G.M."/>
            <person name="Sherman D.R."/>
            <person name="Schoolnik G.K."/>
        </authorList>
    </citation>
    <scope>INDUCTION BY NITRIC OXIDE (NO) AND BY HYPOXIA</scope>
    <scope>DORMANCY REGULON</scope>
    <source>
        <strain>CDC 1551 / Oshkosh</strain>
    </source>
</reference>
<evidence type="ECO:0000269" key="1">
    <source>
    </source>
</evidence>
<comment type="induction">
    <text evidence="1">A member of the dormancy regulon. Induced in response to reduced oxygen tension (hypoxia) and low levels of nitric oxide (NO).</text>
</comment>
<protein>
    <recommendedName>
        <fullName>Uncharacterized protein MT2054</fullName>
    </recommendedName>
</protein>
<feature type="chain" id="PRO_0000427446" description="Uncharacterized protein MT2054">
    <location>
        <begin position="1"/>
        <end position="258"/>
    </location>
</feature>
<proteinExistence type="evidence at transcript level"/>
<gene>
    <name type="ordered locus">MT2054</name>
</gene>
<sequence>MSFHDLHHQGVPFVLPNAWDVPSALAYLAEGFTAIGTTSFGVSSSGGHPDGHRATRGANIALAAALAPLQCYVSVDIEDGYSDEPDAIADYVAQLSTAGINIEDSSAEKLIDPALAAAKIVAIKQRNPEVFVNARVDTYWLRQHADTTSTIQRALRYVDAGADGVFVPLANDPDELAELTRNIPCPVNTLPVPGLTIADLGELGVARVSTGSVPYSAGLYAAAHAARAVSDGEQLPRSVPYAELQARLVDYENRTSTT</sequence>
<organism>
    <name type="scientific">Mycobacterium tuberculosis (strain CDC 1551 / Oshkosh)</name>
    <dbReference type="NCBI Taxonomy" id="83331"/>
    <lineage>
        <taxon>Bacteria</taxon>
        <taxon>Bacillati</taxon>
        <taxon>Actinomycetota</taxon>
        <taxon>Actinomycetes</taxon>
        <taxon>Mycobacteriales</taxon>
        <taxon>Mycobacteriaceae</taxon>
        <taxon>Mycobacterium</taxon>
        <taxon>Mycobacterium tuberculosis complex</taxon>
    </lineage>
</organism>
<keyword id="KW-1185">Reference proteome</keyword>
<accession>P9WLN8</accession>
<accession>L0TB19</accession>
<accession>Q10859</accession>